<dbReference type="EC" id="2.7.4.3" evidence="1"/>
<dbReference type="EMBL" id="AE009950">
    <property type="protein sequence ID" value="AAL81924.1"/>
    <property type="molecule type" value="Genomic_DNA"/>
</dbReference>
<dbReference type="RefSeq" id="WP_011012941.1">
    <property type="nucleotide sequence ID" value="NZ_CP023154.1"/>
</dbReference>
<dbReference type="SMR" id="Q8U020"/>
<dbReference type="STRING" id="186497.PF1800"/>
<dbReference type="PaxDb" id="186497-PF1800"/>
<dbReference type="KEGG" id="pfu:PF1800"/>
<dbReference type="PATRIC" id="fig|186497.12.peg.1871"/>
<dbReference type="eggNOG" id="arCOG01039">
    <property type="taxonomic scope" value="Archaea"/>
</dbReference>
<dbReference type="HOGENOM" id="CLU_119371_0_0_2"/>
<dbReference type="OrthoDB" id="26198at2157"/>
<dbReference type="PhylomeDB" id="Q8U020"/>
<dbReference type="Proteomes" id="UP000001013">
    <property type="component" value="Chromosome"/>
</dbReference>
<dbReference type="GO" id="GO:0005737">
    <property type="term" value="C:cytoplasm"/>
    <property type="evidence" value="ECO:0007669"/>
    <property type="project" value="UniProtKB-SubCell"/>
</dbReference>
<dbReference type="GO" id="GO:0004017">
    <property type="term" value="F:adenylate kinase activity"/>
    <property type="evidence" value="ECO:0007669"/>
    <property type="project" value="UniProtKB-UniRule"/>
</dbReference>
<dbReference type="GO" id="GO:0005524">
    <property type="term" value="F:ATP binding"/>
    <property type="evidence" value="ECO:0007669"/>
    <property type="project" value="UniProtKB-UniRule"/>
</dbReference>
<dbReference type="Gene3D" id="3.40.50.300">
    <property type="entry name" value="P-loop containing nucleotide triphosphate hydrolases"/>
    <property type="match status" value="1"/>
</dbReference>
<dbReference type="HAMAP" id="MF_00234">
    <property type="entry name" value="Adenylate_kinase_AdkA"/>
    <property type="match status" value="1"/>
</dbReference>
<dbReference type="InterPro" id="IPR023477">
    <property type="entry name" value="Adenylate_kinase_AdkA"/>
</dbReference>
<dbReference type="InterPro" id="IPR027417">
    <property type="entry name" value="P-loop_NTPase"/>
</dbReference>
<dbReference type="NCBIfam" id="NF003122">
    <property type="entry name" value="PRK04040.1"/>
    <property type="match status" value="1"/>
</dbReference>
<dbReference type="Pfam" id="PF13207">
    <property type="entry name" value="AAA_17"/>
    <property type="match status" value="1"/>
</dbReference>
<dbReference type="SUPFAM" id="SSF52540">
    <property type="entry name" value="P-loop containing nucleoside triphosphate hydrolases"/>
    <property type="match status" value="1"/>
</dbReference>
<evidence type="ECO:0000255" key="1">
    <source>
        <dbReference type="HAMAP-Rule" id="MF_00234"/>
    </source>
</evidence>
<sequence>MPFVVIITGIPGVGKSTITRLALQRTKAKFRLINFGDLMFEEAVKAGLVKHRDEMRKLPLKIQRELQMKAAKKITEMAKEHPILVDTHATIKTPHGYMLGLPYEVVKTLNPNFIVIIEATPSEILGRRLRDLKRDRDVETEEQIQRHQDLNRAAAIAYAMHSNALIKIIENHEDKGLEEAVNELVKILDLAVNEYA</sequence>
<proteinExistence type="inferred from homology"/>
<feature type="chain" id="PRO_0000131822" description="Adenylate kinase">
    <location>
        <begin position="1"/>
        <end position="196"/>
    </location>
</feature>
<feature type="binding site" evidence="1">
    <location>
        <begin position="9"/>
        <end position="17"/>
    </location>
    <ligand>
        <name>ATP</name>
        <dbReference type="ChEBI" id="CHEBI:30616"/>
    </ligand>
</feature>
<accession>Q8U020</accession>
<reference key="1">
    <citation type="journal article" date="1999" name="Genetics">
        <title>Divergence of the hyperthermophilic archaea Pyrococcus furiosus and P. horikoshii inferred from complete genomic sequences.</title>
        <authorList>
            <person name="Maeder D.L."/>
            <person name="Weiss R.B."/>
            <person name="Dunn D.M."/>
            <person name="Cherry J.L."/>
            <person name="Gonzalez J.M."/>
            <person name="DiRuggiero J."/>
            <person name="Robb F.T."/>
        </authorList>
    </citation>
    <scope>NUCLEOTIDE SEQUENCE [LARGE SCALE GENOMIC DNA]</scope>
    <source>
        <strain>ATCC 43587 / DSM 3638 / JCM 8422 / Vc1</strain>
    </source>
</reference>
<comment type="catalytic activity">
    <reaction evidence="1">
        <text>AMP + ATP = 2 ADP</text>
        <dbReference type="Rhea" id="RHEA:12973"/>
        <dbReference type="ChEBI" id="CHEBI:30616"/>
        <dbReference type="ChEBI" id="CHEBI:456215"/>
        <dbReference type="ChEBI" id="CHEBI:456216"/>
        <dbReference type="EC" id="2.7.4.3"/>
    </reaction>
</comment>
<comment type="subcellular location">
    <subcellularLocation>
        <location evidence="1">Cytoplasm</location>
    </subcellularLocation>
</comment>
<comment type="similarity">
    <text evidence="1">Belongs to the archaeal adenylate kinase family.</text>
</comment>
<keyword id="KW-0067">ATP-binding</keyword>
<keyword id="KW-0963">Cytoplasm</keyword>
<keyword id="KW-0418">Kinase</keyword>
<keyword id="KW-0547">Nucleotide-binding</keyword>
<keyword id="KW-1185">Reference proteome</keyword>
<keyword id="KW-0808">Transferase</keyword>
<organism>
    <name type="scientific">Pyrococcus furiosus (strain ATCC 43587 / DSM 3638 / JCM 8422 / Vc1)</name>
    <dbReference type="NCBI Taxonomy" id="186497"/>
    <lineage>
        <taxon>Archaea</taxon>
        <taxon>Methanobacteriati</taxon>
        <taxon>Methanobacteriota</taxon>
        <taxon>Thermococci</taxon>
        <taxon>Thermococcales</taxon>
        <taxon>Thermococcaceae</taxon>
        <taxon>Pyrococcus</taxon>
    </lineage>
</organism>
<protein>
    <recommendedName>
        <fullName evidence="1">Adenylate kinase</fullName>
        <shortName evidence="1">AK</shortName>
        <ecNumber evidence="1">2.7.4.3</ecNumber>
    </recommendedName>
    <alternativeName>
        <fullName evidence="1">ATP-AMP transphosphorylase</fullName>
    </alternativeName>
</protein>
<name>KADA_PYRFU</name>
<gene>
    <name evidence="1" type="primary">adkA</name>
    <name type="ordered locus">PF1800</name>
</gene>